<accession>B5F3I0</accession>
<proteinExistence type="inferred from homology"/>
<reference key="1">
    <citation type="journal article" date="2011" name="J. Bacteriol.">
        <title>Comparative genomics of 28 Salmonella enterica isolates: evidence for CRISPR-mediated adaptive sublineage evolution.</title>
        <authorList>
            <person name="Fricke W.F."/>
            <person name="Mammel M.K."/>
            <person name="McDermott P.F."/>
            <person name="Tartera C."/>
            <person name="White D.G."/>
            <person name="Leclerc J.E."/>
            <person name="Ravel J."/>
            <person name="Cebula T.A."/>
        </authorList>
    </citation>
    <scope>NUCLEOTIDE SEQUENCE [LARGE SCALE GENOMIC DNA]</scope>
    <source>
        <strain>SL483</strain>
    </source>
</reference>
<name>SYR_SALA4</name>
<comment type="catalytic activity">
    <reaction evidence="1">
        <text>tRNA(Arg) + L-arginine + ATP = L-arginyl-tRNA(Arg) + AMP + diphosphate</text>
        <dbReference type="Rhea" id="RHEA:20301"/>
        <dbReference type="Rhea" id="RHEA-COMP:9658"/>
        <dbReference type="Rhea" id="RHEA-COMP:9673"/>
        <dbReference type="ChEBI" id="CHEBI:30616"/>
        <dbReference type="ChEBI" id="CHEBI:32682"/>
        <dbReference type="ChEBI" id="CHEBI:33019"/>
        <dbReference type="ChEBI" id="CHEBI:78442"/>
        <dbReference type="ChEBI" id="CHEBI:78513"/>
        <dbReference type="ChEBI" id="CHEBI:456215"/>
        <dbReference type="EC" id="6.1.1.19"/>
    </reaction>
</comment>
<comment type="subunit">
    <text evidence="1">Monomer.</text>
</comment>
<comment type="subcellular location">
    <subcellularLocation>
        <location evidence="1">Cytoplasm</location>
    </subcellularLocation>
</comment>
<comment type="similarity">
    <text evidence="1">Belongs to the class-I aminoacyl-tRNA synthetase family.</text>
</comment>
<gene>
    <name evidence="1" type="primary">argS</name>
    <name type="ordered locus">SeAg_B1213</name>
</gene>
<organism>
    <name type="scientific">Salmonella agona (strain SL483)</name>
    <dbReference type="NCBI Taxonomy" id="454166"/>
    <lineage>
        <taxon>Bacteria</taxon>
        <taxon>Pseudomonadati</taxon>
        <taxon>Pseudomonadota</taxon>
        <taxon>Gammaproteobacteria</taxon>
        <taxon>Enterobacterales</taxon>
        <taxon>Enterobacteriaceae</taxon>
        <taxon>Salmonella</taxon>
    </lineage>
</organism>
<dbReference type="EC" id="6.1.1.19" evidence="1"/>
<dbReference type="EMBL" id="CP001138">
    <property type="protein sequence ID" value="ACH49979.1"/>
    <property type="molecule type" value="Genomic_DNA"/>
</dbReference>
<dbReference type="RefSeq" id="WP_001025363.1">
    <property type="nucleotide sequence ID" value="NC_011149.1"/>
</dbReference>
<dbReference type="SMR" id="B5F3I0"/>
<dbReference type="KEGG" id="sea:SeAg_B1213"/>
<dbReference type="HOGENOM" id="CLU_006406_5_1_6"/>
<dbReference type="Proteomes" id="UP000008819">
    <property type="component" value="Chromosome"/>
</dbReference>
<dbReference type="GO" id="GO:0005737">
    <property type="term" value="C:cytoplasm"/>
    <property type="evidence" value="ECO:0007669"/>
    <property type="project" value="UniProtKB-SubCell"/>
</dbReference>
<dbReference type="GO" id="GO:0004814">
    <property type="term" value="F:arginine-tRNA ligase activity"/>
    <property type="evidence" value="ECO:0007669"/>
    <property type="project" value="UniProtKB-UniRule"/>
</dbReference>
<dbReference type="GO" id="GO:0005524">
    <property type="term" value="F:ATP binding"/>
    <property type="evidence" value="ECO:0007669"/>
    <property type="project" value="UniProtKB-UniRule"/>
</dbReference>
<dbReference type="GO" id="GO:0006420">
    <property type="term" value="P:arginyl-tRNA aminoacylation"/>
    <property type="evidence" value="ECO:0007669"/>
    <property type="project" value="UniProtKB-UniRule"/>
</dbReference>
<dbReference type="CDD" id="cd07956">
    <property type="entry name" value="Anticodon_Ia_Arg"/>
    <property type="match status" value="1"/>
</dbReference>
<dbReference type="CDD" id="cd00671">
    <property type="entry name" value="ArgRS_core"/>
    <property type="match status" value="1"/>
</dbReference>
<dbReference type="FunFam" id="1.10.730.10:FF:000001">
    <property type="entry name" value="Arginine--tRNA ligase"/>
    <property type="match status" value="1"/>
</dbReference>
<dbReference type="FunFam" id="3.30.1360.70:FF:000001">
    <property type="entry name" value="Arginine--tRNA ligase"/>
    <property type="match status" value="1"/>
</dbReference>
<dbReference type="FunFam" id="3.40.50.620:FF:000030">
    <property type="entry name" value="Arginine--tRNA ligase"/>
    <property type="match status" value="1"/>
</dbReference>
<dbReference type="Gene3D" id="3.30.1360.70">
    <property type="entry name" value="Arginyl tRNA synthetase N-terminal domain"/>
    <property type="match status" value="1"/>
</dbReference>
<dbReference type="Gene3D" id="3.40.50.620">
    <property type="entry name" value="HUPs"/>
    <property type="match status" value="1"/>
</dbReference>
<dbReference type="Gene3D" id="1.10.730.10">
    <property type="entry name" value="Isoleucyl-tRNA Synthetase, Domain 1"/>
    <property type="match status" value="1"/>
</dbReference>
<dbReference type="HAMAP" id="MF_00123">
    <property type="entry name" value="Arg_tRNA_synth"/>
    <property type="match status" value="1"/>
</dbReference>
<dbReference type="InterPro" id="IPR001412">
    <property type="entry name" value="aa-tRNA-synth_I_CS"/>
</dbReference>
<dbReference type="InterPro" id="IPR001278">
    <property type="entry name" value="Arg-tRNA-ligase"/>
</dbReference>
<dbReference type="InterPro" id="IPR005148">
    <property type="entry name" value="Arg-tRNA-synth_N"/>
</dbReference>
<dbReference type="InterPro" id="IPR036695">
    <property type="entry name" value="Arg-tRNA-synth_N_sf"/>
</dbReference>
<dbReference type="InterPro" id="IPR035684">
    <property type="entry name" value="ArgRS_core"/>
</dbReference>
<dbReference type="InterPro" id="IPR008909">
    <property type="entry name" value="DALR_anticod-bd"/>
</dbReference>
<dbReference type="InterPro" id="IPR014729">
    <property type="entry name" value="Rossmann-like_a/b/a_fold"/>
</dbReference>
<dbReference type="InterPro" id="IPR009080">
    <property type="entry name" value="tRNAsynth_Ia_anticodon-bd"/>
</dbReference>
<dbReference type="NCBIfam" id="TIGR00456">
    <property type="entry name" value="argS"/>
    <property type="match status" value="1"/>
</dbReference>
<dbReference type="PANTHER" id="PTHR11956:SF5">
    <property type="entry name" value="ARGININE--TRNA LIGASE, CYTOPLASMIC"/>
    <property type="match status" value="1"/>
</dbReference>
<dbReference type="PANTHER" id="PTHR11956">
    <property type="entry name" value="ARGINYL-TRNA SYNTHETASE"/>
    <property type="match status" value="1"/>
</dbReference>
<dbReference type="Pfam" id="PF03485">
    <property type="entry name" value="Arg_tRNA_synt_N"/>
    <property type="match status" value="1"/>
</dbReference>
<dbReference type="Pfam" id="PF05746">
    <property type="entry name" value="DALR_1"/>
    <property type="match status" value="1"/>
</dbReference>
<dbReference type="Pfam" id="PF00750">
    <property type="entry name" value="tRNA-synt_1d"/>
    <property type="match status" value="1"/>
</dbReference>
<dbReference type="PRINTS" id="PR01038">
    <property type="entry name" value="TRNASYNTHARG"/>
</dbReference>
<dbReference type="SMART" id="SM01016">
    <property type="entry name" value="Arg_tRNA_synt_N"/>
    <property type="match status" value="1"/>
</dbReference>
<dbReference type="SMART" id="SM00836">
    <property type="entry name" value="DALR_1"/>
    <property type="match status" value="1"/>
</dbReference>
<dbReference type="SUPFAM" id="SSF47323">
    <property type="entry name" value="Anticodon-binding domain of a subclass of class I aminoacyl-tRNA synthetases"/>
    <property type="match status" value="1"/>
</dbReference>
<dbReference type="SUPFAM" id="SSF55190">
    <property type="entry name" value="Arginyl-tRNA synthetase (ArgRS), N-terminal 'additional' domain"/>
    <property type="match status" value="1"/>
</dbReference>
<dbReference type="SUPFAM" id="SSF52374">
    <property type="entry name" value="Nucleotidylyl transferase"/>
    <property type="match status" value="1"/>
</dbReference>
<dbReference type="PROSITE" id="PS00178">
    <property type="entry name" value="AA_TRNA_LIGASE_I"/>
    <property type="match status" value="1"/>
</dbReference>
<feature type="chain" id="PRO_1000095398" description="Arginine--tRNA ligase">
    <location>
        <begin position="1"/>
        <end position="577"/>
    </location>
</feature>
<feature type="short sequence motif" description="'HIGH' region">
    <location>
        <begin position="122"/>
        <end position="132"/>
    </location>
</feature>
<keyword id="KW-0030">Aminoacyl-tRNA synthetase</keyword>
<keyword id="KW-0067">ATP-binding</keyword>
<keyword id="KW-0963">Cytoplasm</keyword>
<keyword id="KW-0436">Ligase</keyword>
<keyword id="KW-0547">Nucleotide-binding</keyword>
<keyword id="KW-0648">Protein biosynthesis</keyword>
<sequence>MNIQALLSEKVSQAMIAAGAPADCEPQVRQSAKVQFGDYQANGMMAVAKKLGMAPRQLAEQVLTHLDLSGIASKVEIAGPGFINIFLEPAFLAEQVQQALASERLGVSQPTRQTIVVDYSAPNVAKEMHVGHLRSTIIGDAAVRTLEFLGHHVIRANHVGDWGTQFGMLIAWLEKQQQENAGDMALADLEGFYRDAKKHYDEDEAFAERARNYVVKLQSGDAYFREMWRKLVDITMTQNQITYDRLNVTLTRDDVMGESLYNPMLPGIVADLKAKGLAVESEGATVVFLDEFKNKEGDPMGVIIQKKDGGYLYTTTDIACAKYRYETLHADRVLYYIDSRQHQHLMQAWTIVRKAGYVPDSVPLEHHMFGMMLGKDGKPFKTRAGGTVKLADLLDEALERARRLVAEKNPDMPADELEKLANAVGIGAVKYADLSKNRTTDYIFDWDNMLAFEGNTAPYMQYAYTRVLSVFRKADIDEQALASAPVIISEDREAQLAARLLQFEETLTVVAREGTPHVMCAYLYDVAGLFSGFYEHCPILSAENDAVRNSRLKLAQLTAKTLKLGLDTLGIETVERM</sequence>
<evidence type="ECO:0000255" key="1">
    <source>
        <dbReference type="HAMAP-Rule" id="MF_00123"/>
    </source>
</evidence>
<protein>
    <recommendedName>
        <fullName evidence="1">Arginine--tRNA ligase</fullName>
        <ecNumber evidence="1">6.1.1.19</ecNumber>
    </recommendedName>
    <alternativeName>
        <fullName evidence="1">Arginyl-tRNA synthetase</fullName>
        <shortName evidence="1">ArgRS</shortName>
    </alternativeName>
</protein>